<proteinExistence type="inferred from homology"/>
<evidence type="ECO:0000255" key="1">
    <source>
        <dbReference type="HAMAP-Rule" id="MF_00054"/>
    </source>
</evidence>
<feature type="chain" id="PRO_1000071147" description="Elongation factor 2">
    <location>
        <begin position="1"/>
        <end position="736"/>
    </location>
</feature>
<feature type="domain" description="tr-type G">
    <location>
        <begin position="18"/>
        <end position="262"/>
    </location>
</feature>
<feature type="binding site" evidence="1">
    <location>
        <begin position="27"/>
        <end position="34"/>
    </location>
    <ligand>
        <name>GTP</name>
        <dbReference type="ChEBI" id="CHEBI:37565"/>
    </ligand>
</feature>
<feature type="binding site" evidence="1">
    <location>
        <begin position="93"/>
        <end position="97"/>
    </location>
    <ligand>
        <name>GTP</name>
        <dbReference type="ChEBI" id="CHEBI:37565"/>
    </ligand>
</feature>
<feature type="binding site" evidence="1">
    <location>
        <begin position="147"/>
        <end position="150"/>
    </location>
    <ligand>
        <name>GTP</name>
        <dbReference type="ChEBI" id="CHEBI:37565"/>
    </ligand>
</feature>
<feature type="modified residue" description="Diphthamide" evidence="1">
    <location>
        <position position="603"/>
    </location>
</feature>
<protein>
    <recommendedName>
        <fullName evidence="1">Elongation factor 2</fullName>
        <shortName evidence="1">EF-2</shortName>
    </recommendedName>
</protein>
<reference key="1">
    <citation type="journal article" date="2008" name="Appl. Environ. Microbiol.">
        <title>The genome sequence of the metal-mobilizing, extremely thermoacidophilic archaeon Metallosphaera sedula provides insights into bioleaching-associated metabolism.</title>
        <authorList>
            <person name="Auernik K.S."/>
            <person name="Maezato Y."/>
            <person name="Blum P.H."/>
            <person name="Kelly R.M."/>
        </authorList>
    </citation>
    <scope>NUCLEOTIDE SEQUENCE [LARGE SCALE GENOMIC DNA]</scope>
    <source>
        <strain>ATCC 51363 / DSM 5348 / JCM 9185 / NBRC 15509 / TH2</strain>
    </source>
</reference>
<name>EF2_METS5</name>
<dbReference type="EMBL" id="CP000682">
    <property type="protein sequence ID" value="ABP94261.1"/>
    <property type="molecule type" value="Genomic_DNA"/>
</dbReference>
<dbReference type="RefSeq" id="WP_011921230.1">
    <property type="nucleotide sequence ID" value="NZ_CP139956.1"/>
</dbReference>
<dbReference type="SMR" id="A4YCV9"/>
<dbReference type="STRING" id="399549.Msed_0084"/>
<dbReference type="KEGG" id="mse:Msed_0084"/>
<dbReference type="eggNOG" id="arCOG01559">
    <property type="taxonomic scope" value="Archaea"/>
</dbReference>
<dbReference type="HOGENOM" id="CLU_002794_11_1_2"/>
<dbReference type="Proteomes" id="UP000000242">
    <property type="component" value="Chromosome"/>
</dbReference>
<dbReference type="GO" id="GO:0005829">
    <property type="term" value="C:cytosol"/>
    <property type="evidence" value="ECO:0007669"/>
    <property type="project" value="TreeGrafter"/>
</dbReference>
<dbReference type="GO" id="GO:1990904">
    <property type="term" value="C:ribonucleoprotein complex"/>
    <property type="evidence" value="ECO:0007669"/>
    <property type="project" value="TreeGrafter"/>
</dbReference>
<dbReference type="GO" id="GO:0005525">
    <property type="term" value="F:GTP binding"/>
    <property type="evidence" value="ECO:0007669"/>
    <property type="project" value="UniProtKB-UniRule"/>
</dbReference>
<dbReference type="GO" id="GO:0003924">
    <property type="term" value="F:GTPase activity"/>
    <property type="evidence" value="ECO:0007669"/>
    <property type="project" value="InterPro"/>
</dbReference>
<dbReference type="GO" id="GO:0003746">
    <property type="term" value="F:translation elongation factor activity"/>
    <property type="evidence" value="ECO:0007669"/>
    <property type="project" value="UniProtKB-UniRule"/>
</dbReference>
<dbReference type="CDD" id="cd01681">
    <property type="entry name" value="aeEF2_snRNP_like_IV"/>
    <property type="match status" value="1"/>
</dbReference>
<dbReference type="CDD" id="cd01885">
    <property type="entry name" value="EF2"/>
    <property type="match status" value="1"/>
</dbReference>
<dbReference type="CDD" id="cd16268">
    <property type="entry name" value="EF2_II"/>
    <property type="match status" value="1"/>
</dbReference>
<dbReference type="CDD" id="cd16261">
    <property type="entry name" value="EF2_snRNP_III"/>
    <property type="match status" value="1"/>
</dbReference>
<dbReference type="CDD" id="cd01514">
    <property type="entry name" value="Elongation_Factor_C"/>
    <property type="match status" value="1"/>
</dbReference>
<dbReference type="FunFam" id="3.30.230.10:FF:000009">
    <property type="entry name" value="116 kDa U5 small nuclear ribonucleoprotein component"/>
    <property type="match status" value="1"/>
</dbReference>
<dbReference type="FunFam" id="3.30.70.240:FF:000010">
    <property type="entry name" value="Elongation factor 2"/>
    <property type="match status" value="1"/>
</dbReference>
<dbReference type="FunFam" id="3.40.50.300:FF:000684">
    <property type="entry name" value="Elongation factor 2"/>
    <property type="match status" value="1"/>
</dbReference>
<dbReference type="FunFam" id="3.30.70.870:FF:000002">
    <property type="entry name" value="Translation elongation factor 2"/>
    <property type="match status" value="1"/>
</dbReference>
<dbReference type="Gene3D" id="3.30.230.10">
    <property type="match status" value="1"/>
</dbReference>
<dbReference type="Gene3D" id="3.30.70.240">
    <property type="match status" value="1"/>
</dbReference>
<dbReference type="Gene3D" id="3.30.70.870">
    <property type="entry name" value="Elongation Factor G (Translational Gtpase), domain 3"/>
    <property type="match status" value="1"/>
</dbReference>
<dbReference type="Gene3D" id="3.40.50.300">
    <property type="entry name" value="P-loop containing nucleotide triphosphate hydrolases"/>
    <property type="match status" value="1"/>
</dbReference>
<dbReference type="Gene3D" id="2.40.30.10">
    <property type="entry name" value="Translation factors"/>
    <property type="match status" value="1"/>
</dbReference>
<dbReference type="HAMAP" id="MF_00054_A">
    <property type="entry name" value="EF_G_EF_2_A"/>
    <property type="match status" value="1"/>
</dbReference>
<dbReference type="InterPro" id="IPR041095">
    <property type="entry name" value="EFG_II"/>
</dbReference>
<dbReference type="InterPro" id="IPR035647">
    <property type="entry name" value="EFG_III/V"/>
</dbReference>
<dbReference type="InterPro" id="IPR000640">
    <property type="entry name" value="EFG_V-like"/>
</dbReference>
<dbReference type="InterPro" id="IPR004161">
    <property type="entry name" value="EFTu-like_2"/>
</dbReference>
<dbReference type="InterPro" id="IPR031157">
    <property type="entry name" value="G_TR_CS"/>
</dbReference>
<dbReference type="InterPro" id="IPR027417">
    <property type="entry name" value="P-loop_NTPase"/>
</dbReference>
<dbReference type="InterPro" id="IPR020568">
    <property type="entry name" value="Ribosomal_Su5_D2-typ_SF"/>
</dbReference>
<dbReference type="InterPro" id="IPR014721">
    <property type="entry name" value="Ribsml_uS5_D2-typ_fold_subgr"/>
</dbReference>
<dbReference type="InterPro" id="IPR005225">
    <property type="entry name" value="Small_GTP-bd"/>
</dbReference>
<dbReference type="InterPro" id="IPR000795">
    <property type="entry name" value="T_Tr_GTP-bd_dom"/>
</dbReference>
<dbReference type="InterPro" id="IPR009000">
    <property type="entry name" value="Transl_B-barrel_sf"/>
</dbReference>
<dbReference type="InterPro" id="IPR004543">
    <property type="entry name" value="Transl_elong_EFG/EF2_arc"/>
</dbReference>
<dbReference type="InterPro" id="IPR005517">
    <property type="entry name" value="Transl_elong_EFG/EF2_IV"/>
</dbReference>
<dbReference type="NCBIfam" id="TIGR00490">
    <property type="entry name" value="aEF-2"/>
    <property type="match status" value="1"/>
</dbReference>
<dbReference type="NCBIfam" id="TIGR00231">
    <property type="entry name" value="small_GTP"/>
    <property type="match status" value="1"/>
</dbReference>
<dbReference type="PANTHER" id="PTHR42908:SF3">
    <property type="entry name" value="ELONGATION FACTOR-LIKE GTPASE 1"/>
    <property type="match status" value="1"/>
</dbReference>
<dbReference type="PANTHER" id="PTHR42908">
    <property type="entry name" value="TRANSLATION ELONGATION FACTOR-RELATED"/>
    <property type="match status" value="1"/>
</dbReference>
<dbReference type="Pfam" id="PF00679">
    <property type="entry name" value="EFG_C"/>
    <property type="match status" value="1"/>
</dbReference>
<dbReference type="Pfam" id="PF14492">
    <property type="entry name" value="EFG_III"/>
    <property type="match status" value="1"/>
</dbReference>
<dbReference type="Pfam" id="PF03764">
    <property type="entry name" value="EFG_IV"/>
    <property type="match status" value="1"/>
</dbReference>
<dbReference type="Pfam" id="PF00009">
    <property type="entry name" value="GTP_EFTU"/>
    <property type="match status" value="1"/>
</dbReference>
<dbReference type="Pfam" id="PF03144">
    <property type="entry name" value="GTP_EFTU_D2"/>
    <property type="match status" value="1"/>
</dbReference>
<dbReference type="PRINTS" id="PR00315">
    <property type="entry name" value="ELONGATNFCT"/>
</dbReference>
<dbReference type="SMART" id="SM00838">
    <property type="entry name" value="EFG_C"/>
    <property type="match status" value="1"/>
</dbReference>
<dbReference type="SMART" id="SM00889">
    <property type="entry name" value="EFG_IV"/>
    <property type="match status" value="1"/>
</dbReference>
<dbReference type="SUPFAM" id="SSF54980">
    <property type="entry name" value="EF-G C-terminal domain-like"/>
    <property type="match status" value="2"/>
</dbReference>
<dbReference type="SUPFAM" id="SSF52540">
    <property type="entry name" value="P-loop containing nucleoside triphosphate hydrolases"/>
    <property type="match status" value="1"/>
</dbReference>
<dbReference type="SUPFAM" id="SSF54211">
    <property type="entry name" value="Ribosomal protein S5 domain 2-like"/>
    <property type="match status" value="1"/>
</dbReference>
<dbReference type="SUPFAM" id="SSF50447">
    <property type="entry name" value="Translation proteins"/>
    <property type="match status" value="1"/>
</dbReference>
<dbReference type="PROSITE" id="PS00301">
    <property type="entry name" value="G_TR_1"/>
    <property type="match status" value="1"/>
</dbReference>
<dbReference type="PROSITE" id="PS51722">
    <property type="entry name" value="G_TR_2"/>
    <property type="match status" value="1"/>
</dbReference>
<accession>A4YCV9</accession>
<comment type="function">
    <text evidence="1">Catalyzes the GTP-dependent ribosomal translocation step during translation elongation. During this step, the ribosome changes from the pre-translocational (PRE) to the post-translocational (POST) state as the newly formed A-site-bound peptidyl-tRNA and P-site-bound deacylated tRNA move to the P and E sites, respectively. Catalyzes the coordinated movement of the two tRNA molecules, the mRNA and conformational changes in the ribosome.</text>
</comment>
<comment type="subcellular location">
    <subcellularLocation>
        <location evidence="1">Cytoplasm</location>
    </subcellularLocation>
</comment>
<comment type="similarity">
    <text evidence="1">Belongs to the TRAFAC class translation factor GTPase superfamily. Classic translation factor GTPase family. EF-G/EF-2 subfamily.</text>
</comment>
<keyword id="KW-0963">Cytoplasm</keyword>
<keyword id="KW-0251">Elongation factor</keyword>
<keyword id="KW-0342">GTP-binding</keyword>
<keyword id="KW-0547">Nucleotide-binding</keyword>
<keyword id="KW-0648">Protein biosynthesis</keyword>
<keyword id="KW-1185">Reference proteome</keyword>
<gene>
    <name evidence="1" type="primary">fusA</name>
    <name type="ordered locus">Msed_0084</name>
</gene>
<sequence>MPKYKTSEQVLSLMKDRTRVRNIGIIAHVDHGKTTTSDQLLAASGIISPKVAGEALALDYLSVEQQRGITVKAANVSLYHEVEGKGYVINLIDTPGHVDFSGRVTRSLRVLDGSIVVVDSVEGVMTQTETVLRQSLEERVRPILFVNKVDRLVKELKLGPQEMMQKLMDIIKEVNNLINIYAEPELKEKWAINPTLGNVVFGSAKDRWGFSIPMAQKKGINMKHVIDAYSTTDKTKINELASQVPINEALLDAVIKFVPNPVDAQKYRIPKIWKGDLDNELAKSMLNADPNGPVVMMITDMKVDPHAGLVATGRVFSGTIRPGSEVWLVNAKAPQKVLQVSIYMGQFRELADEIPAGNIAAVLGLERARSGETLIDIRYKDLQGSFEKLHYVSEPVVTIAVEPKNPKDLTKMIDALRKLSIEDPNLVVKINEETGEYLLSGMGFLHVEVSLQLLKDNYGVDVVTTPPIVVYRESVRNKSQVFEGKSPNKHNKFYISVEPLNDKTIELISNGTIKEDMDSKEMAKILRDQADWDYDEAKKIIAIDENVNVLIDATSGVQHLREIMDTMLQGYRLAMREGPLAHEPIRGVKVILHDATIHEDPAHRGPAQIYPAVRNAIFAAMLMSKPTLLEPLQKLDIRVPMEFVGNVTAVLSRKRGKVLNMTQSGSVARILAEIPVSESYELASDLRGSTGGRAFWGTEFSKWAPVPDSILTDVILKIRERKGLPKELPKVEDFLS</sequence>
<organism>
    <name type="scientific">Metallosphaera sedula (strain ATCC 51363 / DSM 5348 / JCM 9185 / NBRC 15509 / TH2)</name>
    <dbReference type="NCBI Taxonomy" id="399549"/>
    <lineage>
        <taxon>Archaea</taxon>
        <taxon>Thermoproteota</taxon>
        <taxon>Thermoprotei</taxon>
        <taxon>Sulfolobales</taxon>
        <taxon>Sulfolobaceae</taxon>
        <taxon>Metallosphaera</taxon>
    </lineage>
</organism>